<organism>
    <name type="scientific">Pseudoalteromonas translucida (strain TAC 125)</name>
    <dbReference type="NCBI Taxonomy" id="326442"/>
    <lineage>
        <taxon>Bacteria</taxon>
        <taxon>Pseudomonadati</taxon>
        <taxon>Pseudomonadota</taxon>
        <taxon>Gammaproteobacteria</taxon>
        <taxon>Alteromonadales</taxon>
        <taxon>Pseudoalteromonadaceae</taxon>
        <taxon>Pseudoalteromonas</taxon>
    </lineage>
</organism>
<comment type="function">
    <text evidence="1">Catalyzes the last two steps in the biosynthesis of 5-methylaminomethyl-2-thiouridine (mnm(5)s(2)U) at the wobble position (U34) in tRNA. Catalyzes the FAD-dependent demodification of cmnm(5)s(2)U34 to nm(5)s(2)U34, followed by the transfer of a methyl group from S-adenosyl-L-methionine to nm(5)s(2)U34, to form mnm(5)s(2)U34.</text>
</comment>
<comment type="catalytic activity">
    <reaction evidence="1">
        <text>5-aminomethyl-2-thiouridine(34) in tRNA + S-adenosyl-L-methionine = 5-methylaminomethyl-2-thiouridine(34) in tRNA + S-adenosyl-L-homocysteine + H(+)</text>
        <dbReference type="Rhea" id="RHEA:19569"/>
        <dbReference type="Rhea" id="RHEA-COMP:10195"/>
        <dbReference type="Rhea" id="RHEA-COMP:10197"/>
        <dbReference type="ChEBI" id="CHEBI:15378"/>
        <dbReference type="ChEBI" id="CHEBI:57856"/>
        <dbReference type="ChEBI" id="CHEBI:59789"/>
        <dbReference type="ChEBI" id="CHEBI:74454"/>
        <dbReference type="ChEBI" id="CHEBI:74455"/>
        <dbReference type="EC" id="2.1.1.61"/>
    </reaction>
</comment>
<comment type="cofactor">
    <cofactor evidence="1">
        <name>FAD</name>
        <dbReference type="ChEBI" id="CHEBI:57692"/>
    </cofactor>
</comment>
<comment type="subcellular location">
    <subcellularLocation>
        <location evidence="1">Cytoplasm</location>
    </subcellularLocation>
</comment>
<comment type="similarity">
    <text evidence="1">In the N-terminal section; belongs to the methyltransferase superfamily. tRNA (mnm(5)s(2)U34)-methyltransferase family.</text>
</comment>
<comment type="similarity">
    <text evidence="1">In the C-terminal section; belongs to the DAO family.</text>
</comment>
<protein>
    <recommendedName>
        <fullName evidence="1">tRNA 5-methylaminomethyl-2-thiouridine biosynthesis bifunctional protein MnmC</fullName>
        <shortName evidence="1">tRNA mnm(5)s(2)U biosynthesis bifunctional protein</shortName>
    </recommendedName>
    <domain>
        <recommendedName>
            <fullName evidence="1">tRNA (mnm(5)s(2)U34)-methyltransferase</fullName>
            <ecNumber evidence="1">2.1.1.61</ecNumber>
        </recommendedName>
    </domain>
    <domain>
        <recommendedName>
            <fullName evidence="1">FAD-dependent cmnm(5)s(2)U34 oxidoreductase</fullName>
            <ecNumber evidence="1">1.5.-.-</ecNumber>
        </recommendedName>
    </domain>
</protein>
<keyword id="KW-0963">Cytoplasm</keyword>
<keyword id="KW-0274">FAD</keyword>
<keyword id="KW-0285">Flavoprotein</keyword>
<keyword id="KW-0489">Methyltransferase</keyword>
<keyword id="KW-0511">Multifunctional enzyme</keyword>
<keyword id="KW-0560">Oxidoreductase</keyword>
<keyword id="KW-1185">Reference proteome</keyword>
<keyword id="KW-0949">S-adenosyl-L-methionine</keyword>
<keyword id="KW-0808">Transferase</keyword>
<keyword id="KW-0819">tRNA processing</keyword>
<reference key="1">
    <citation type="journal article" date="2005" name="Genome Res.">
        <title>Coping with cold: the genome of the versatile marine Antarctica bacterium Pseudoalteromonas haloplanktis TAC125.</title>
        <authorList>
            <person name="Medigue C."/>
            <person name="Krin E."/>
            <person name="Pascal G."/>
            <person name="Barbe V."/>
            <person name="Bernsel A."/>
            <person name="Bertin P.N."/>
            <person name="Cheung F."/>
            <person name="Cruveiller S."/>
            <person name="D'Amico S."/>
            <person name="Duilio A."/>
            <person name="Fang G."/>
            <person name="Feller G."/>
            <person name="Ho C."/>
            <person name="Mangenot S."/>
            <person name="Marino G."/>
            <person name="Nilsson J."/>
            <person name="Parrilli E."/>
            <person name="Rocha E.P.C."/>
            <person name="Rouy Z."/>
            <person name="Sekowska A."/>
            <person name="Tutino M.L."/>
            <person name="Vallenet D."/>
            <person name="von Heijne G."/>
            <person name="Danchin A."/>
        </authorList>
    </citation>
    <scope>NUCLEOTIDE SEQUENCE [LARGE SCALE GENOMIC DNA]</scope>
    <source>
        <strain>TAC 125</strain>
    </source>
</reference>
<feature type="chain" id="PRO_0000348010" description="tRNA 5-methylaminomethyl-2-thiouridine biosynthesis bifunctional protein MnmC">
    <location>
        <begin position="1"/>
        <end position="669"/>
    </location>
</feature>
<feature type="region of interest" description="tRNA (mnm(5)s(2)U34)-methyltransferase">
    <location>
        <begin position="1"/>
        <end position="246"/>
    </location>
</feature>
<feature type="region of interest" description="FAD-dependent cmnm(5)s(2)U34 oxidoreductase">
    <location>
        <begin position="271"/>
        <end position="669"/>
    </location>
</feature>
<name>MNMC_PSET1</name>
<proteinExistence type="inferred from homology"/>
<gene>
    <name evidence="1" type="primary">mnmC</name>
    <name type="ordered locus">PSHAa2081</name>
</gene>
<dbReference type="EC" id="2.1.1.61" evidence="1"/>
<dbReference type="EC" id="1.5.-.-" evidence="1"/>
<dbReference type="EMBL" id="CR954246">
    <property type="protein sequence ID" value="CAI87137.1"/>
    <property type="molecule type" value="Genomic_DNA"/>
</dbReference>
<dbReference type="SMR" id="Q3IF34"/>
<dbReference type="STRING" id="326442.PSHAa2081"/>
<dbReference type="KEGG" id="pha:PSHAa2081"/>
<dbReference type="PATRIC" id="fig|326442.8.peg.2008"/>
<dbReference type="eggNOG" id="COG0665">
    <property type="taxonomic scope" value="Bacteria"/>
</dbReference>
<dbReference type="eggNOG" id="COG4121">
    <property type="taxonomic scope" value="Bacteria"/>
</dbReference>
<dbReference type="HOGENOM" id="CLU_022427_2_1_6"/>
<dbReference type="BioCyc" id="PHAL326442:PSHA_RS10300-MONOMER"/>
<dbReference type="Proteomes" id="UP000006843">
    <property type="component" value="Chromosome I"/>
</dbReference>
<dbReference type="GO" id="GO:0005737">
    <property type="term" value="C:cytoplasm"/>
    <property type="evidence" value="ECO:0007669"/>
    <property type="project" value="UniProtKB-SubCell"/>
</dbReference>
<dbReference type="GO" id="GO:0050660">
    <property type="term" value="F:flavin adenine dinucleotide binding"/>
    <property type="evidence" value="ECO:0007669"/>
    <property type="project" value="UniProtKB-UniRule"/>
</dbReference>
<dbReference type="GO" id="GO:0016645">
    <property type="term" value="F:oxidoreductase activity, acting on the CH-NH group of donors"/>
    <property type="evidence" value="ECO:0007669"/>
    <property type="project" value="InterPro"/>
</dbReference>
<dbReference type="GO" id="GO:0004808">
    <property type="term" value="F:tRNA (5-methylaminomethyl-2-thiouridylate)(34)-methyltransferase activity"/>
    <property type="evidence" value="ECO:0007669"/>
    <property type="project" value="UniProtKB-EC"/>
</dbReference>
<dbReference type="GO" id="GO:0032259">
    <property type="term" value="P:methylation"/>
    <property type="evidence" value="ECO:0007669"/>
    <property type="project" value="UniProtKB-KW"/>
</dbReference>
<dbReference type="GO" id="GO:0002098">
    <property type="term" value="P:tRNA wobble uridine modification"/>
    <property type="evidence" value="ECO:0007669"/>
    <property type="project" value="TreeGrafter"/>
</dbReference>
<dbReference type="Gene3D" id="3.30.9.10">
    <property type="entry name" value="D-Amino Acid Oxidase, subunit A, domain 2"/>
    <property type="match status" value="1"/>
</dbReference>
<dbReference type="Gene3D" id="3.50.50.60">
    <property type="entry name" value="FAD/NAD(P)-binding domain"/>
    <property type="match status" value="1"/>
</dbReference>
<dbReference type="Gene3D" id="3.40.50.150">
    <property type="entry name" value="Vaccinia Virus protein VP39"/>
    <property type="match status" value="1"/>
</dbReference>
<dbReference type="HAMAP" id="MF_01102">
    <property type="entry name" value="MnmC"/>
    <property type="match status" value="1"/>
</dbReference>
<dbReference type="InterPro" id="IPR006076">
    <property type="entry name" value="FAD-dep_OxRdtase"/>
</dbReference>
<dbReference type="InterPro" id="IPR036188">
    <property type="entry name" value="FAD/NAD-bd_sf"/>
</dbReference>
<dbReference type="InterPro" id="IPR008471">
    <property type="entry name" value="MnmC-like_methylTransf"/>
</dbReference>
<dbReference type="InterPro" id="IPR029063">
    <property type="entry name" value="SAM-dependent_MTases_sf"/>
</dbReference>
<dbReference type="InterPro" id="IPR023032">
    <property type="entry name" value="tRNA_MAMT_biosynth_bifunc_MnmC"/>
</dbReference>
<dbReference type="InterPro" id="IPR047785">
    <property type="entry name" value="tRNA_MNMC2"/>
</dbReference>
<dbReference type="InterPro" id="IPR017610">
    <property type="entry name" value="tRNA_S-uridine_synth_MnmC_C"/>
</dbReference>
<dbReference type="NCBIfam" id="TIGR03197">
    <property type="entry name" value="MnmC_Cterm"/>
    <property type="match status" value="1"/>
</dbReference>
<dbReference type="NCBIfam" id="NF002481">
    <property type="entry name" value="PRK01747.1-2"/>
    <property type="match status" value="1"/>
</dbReference>
<dbReference type="NCBIfam" id="NF033855">
    <property type="entry name" value="tRNA_MNMC2"/>
    <property type="match status" value="1"/>
</dbReference>
<dbReference type="PANTHER" id="PTHR13847">
    <property type="entry name" value="SARCOSINE DEHYDROGENASE-RELATED"/>
    <property type="match status" value="1"/>
</dbReference>
<dbReference type="PANTHER" id="PTHR13847:SF283">
    <property type="entry name" value="TRNA 5-METHYLAMINOMETHYL-2-THIOURIDINE BIOSYNTHESIS BIFUNCTIONAL PROTEIN MNMC"/>
    <property type="match status" value="1"/>
</dbReference>
<dbReference type="Pfam" id="PF01266">
    <property type="entry name" value="DAO"/>
    <property type="match status" value="1"/>
</dbReference>
<dbReference type="Pfam" id="PF05430">
    <property type="entry name" value="Methyltransf_30"/>
    <property type="match status" value="1"/>
</dbReference>
<dbReference type="SUPFAM" id="SSF51905">
    <property type="entry name" value="FAD/NAD(P)-binding domain"/>
    <property type="match status" value="1"/>
</dbReference>
<accession>Q3IF34</accession>
<evidence type="ECO:0000255" key="1">
    <source>
        <dbReference type="HAMAP-Rule" id="MF_01102"/>
    </source>
</evidence>
<sequence>MIKNANIHFNHQGTPVANDFDDIYYSDDNGLAESYYVFYQQNNIDTRLQSHDQAHFVIAETGFGTGLNFLNTCQHFTDHLARQQVQKQLNYGVKRLHFIAFEKHPLSVSDLSKILTAWPELNLLSEQLISQYPINLAGCHRLEFNNGTIVLDLYFGDALESIKTMSYPRSGIVDAWFLDGFAPSKNPDMWQQSLFNAMVNISKVGATLATFTAAGFVRRGLSDAGFTMQKVKGFAHKRSMLIGTLKHTNDTQSAPSYFNHDVSPLSNVAVIGGGIASSCILYSLAKRGISSQLFCQDAAPAMGASHNVQGAVYPHLQAKNSPHSELFAHSFLYAKRLYKQLLNDGFSFDHSWCGVLQHAVKQPLVDRHENLAQQQLWPQTLMRNVTAEQGDTIAGVTTGYSGVYFEQGGWVNPPQLVNAMLSAAHCLSPYKSTFNCHIEQLKKTSNGWLLFSNGKQFGPFSDVIICAGEHSDAFAQTKALPIVGVRGQVSHVQASEQSTKLKTVLCHKGYFTPAYLDHHCMGATFEKNTKSRQVTEQDNLSNREQLLNFYGHCNFATSLGNITAAKAAVRCSFIDHLPMAGEWVEQSDYLTAFANLRLGKRYQYQALSKKQQGLHIFTGFGARALCSAPLCSEHLISSLNNEPRPLSERVSQAIHPARFIVRDLIRNKI</sequence>